<evidence type="ECO:0000255" key="1">
    <source>
        <dbReference type="HAMAP-Rule" id="MF_00251"/>
    </source>
</evidence>
<evidence type="ECO:0000305" key="2"/>
<name>RK36_CAPBU</name>
<feature type="chain" id="PRO_0000344746" description="Large ribosomal subunit protein bL36c">
    <location>
        <begin position="1"/>
        <end position="37"/>
    </location>
</feature>
<geneLocation type="chloroplast"/>
<comment type="subcellular location">
    <subcellularLocation>
        <location>Plastid</location>
        <location>Chloroplast</location>
    </subcellularLocation>
</comment>
<comment type="similarity">
    <text evidence="1">Belongs to the bacterial ribosomal protein bL36 family.</text>
</comment>
<proteinExistence type="inferred from homology"/>
<dbReference type="EMBL" id="AP009371">
    <property type="protein sequence ID" value="BAF50231.1"/>
    <property type="molecule type" value="Genomic_DNA"/>
</dbReference>
<dbReference type="RefSeq" id="YP_001123407.1">
    <property type="nucleotide sequence ID" value="NC_009270.1"/>
</dbReference>
<dbReference type="SMR" id="A4QKM6"/>
<dbReference type="GeneID" id="4961713"/>
<dbReference type="GO" id="GO:0009507">
    <property type="term" value="C:chloroplast"/>
    <property type="evidence" value="ECO:0007669"/>
    <property type="project" value="UniProtKB-SubCell"/>
</dbReference>
<dbReference type="GO" id="GO:1990904">
    <property type="term" value="C:ribonucleoprotein complex"/>
    <property type="evidence" value="ECO:0007669"/>
    <property type="project" value="UniProtKB-KW"/>
</dbReference>
<dbReference type="GO" id="GO:0005840">
    <property type="term" value="C:ribosome"/>
    <property type="evidence" value="ECO:0007669"/>
    <property type="project" value="UniProtKB-KW"/>
</dbReference>
<dbReference type="GO" id="GO:0003735">
    <property type="term" value="F:structural constituent of ribosome"/>
    <property type="evidence" value="ECO:0007669"/>
    <property type="project" value="InterPro"/>
</dbReference>
<dbReference type="GO" id="GO:0006412">
    <property type="term" value="P:translation"/>
    <property type="evidence" value="ECO:0007669"/>
    <property type="project" value="UniProtKB-UniRule"/>
</dbReference>
<dbReference type="HAMAP" id="MF_00251">
    <property type="entry name" value="Ribosomal_bL36"/>
    <property type="match status" value="1"/>
</dbReference>
<dbReference type="InterPro" id="IPR000473">
    <property type="entry name" value="Ribosomal_bL36"/>
</dbReference>
<dbReference type="InterPro" id="IPR035977">
    <property type="entry name" value="Ribosomal_bL36_sp"/>
</dbReference>
<dbReference type="NCBIfam" id="TIGR01022">
    <property type="entry name" value="rpmJ_bact"/>
    <property type="match status" value="1"/>
</dbReference>
<dbReference type="PANTHER" id="PTHR42888">
    <property type="entry name" value="50S RIBOSOMAL PROTEIN L36, CHLOROPLASTIC"/>
    <property type="match status" value="1"/>
</dbReference>
<dbReference type="PANTHER" id="PTHR42888:SF1">
    <property type="entry name" value="LARGE RIBOSOMAL SUBUNIT PROTEIN BL36C"/>
    <property type="match status" value="1"/>
</dbReference>
<dbReference type="Pfam" id="PF00444">
    <property type="entry name" value="Ribosomal_L36"/>
    <property type="match status" value="1"/>
</dbReference>
<dbReference type="SUPFAM" id="SSF57840">
    <property type="entry name" value="Ribosomal protein L36"/>
    <property type="match status" value="1"/>
</dbReference>
<dbReference type="PROSITE" id="PS00828">
    <property type="entry name" value="RIBOSOMAL_L36"/>
    <property type="match status" value="1"/>
</dbReference>
<protein>
    <recommendedName>
        <fullName evidence="1">Large ribosomal subunit protein bL36c</fullName>
    </recommendedName>
    <alternativeName>
        <fullName evidence="2">50S ribosomal protein L36, chloroplastic</fullName>
    </alternativeName>
</protein>
<organism>
    <name type="scientific">Capsella bursa-pastoris</name>
    <name type="common">Shepherd's purse</name>
    <name type="synonym">Thlaspi bursa-pastoris</name>
    <dbReference type="NCBI Taxonomy" id="3719"/>
    <lineage>
        <taxon>Eukaryota</taxon>
        <taxon>Viridiplantae</taxon>
        <taxon>Streptophyta</taxon>
        <taxon>Embryophyta</taxon>
        <taxon>Tracheophyta</taxon>
        <taxon>Spermatophyta</taxon>
        <taxon>Magnoliopsida</taxon>
        <taxon>eudicotyledons</taxon>
        <taxon>Gunneridae</taxon>
        <taxon>Pentapetalae</taxon>
        <taxon>rosids</taxon>
        <taxon>malvids</taxon>
        <taxon>Brassicales</taxon>
        <taxon>Brassicaceae</taxon>
        <taxon>Camelineae</taxon>
        <taxon>Capsella</taxon>
    </lineage>
</organism>
<gene>
    <name evidence="1" type="primary">rpl36</name>
</gene>
<reference key="1">
    <citation type="submission" date="2007-03" db="EMBL/GenBank/DDBJ databases">
        <title>Sequencing analysis of Capsella bursa-pastoris JO22 chloroplast DNA.</title>
        <authorList>
            <person name="Hosouchi T."/>
            <person name="Tsuruoka H."/>
            <person name="Kotani H."/>
        </authorList>
    </citation>
    <scope>NUCLEOTIDE SEQUENCE [LARGE SCALE GENOMIC DNA]</scope>
</reference>
<sequence>MKIRASVRKICEKCRLIRRRGRIRVICSNPRHKQRQG</sequence>
<accession>A4QKM6</accession>
<keyword id="KW-0150">Chloroplast</keyword>
<keyword id="KW-0934">Plastid</keyword>
<keyword id="KW-0687">Ribonucleoprotein</keyword>
<keyword id="KW-0689">Ribosomal protein</keyword>